<comment type="function">
    <text evidence="1">Catalyzes the attachment of valine to tRNA(Val). As ValRS can inadvertently accommodate and process structurally similar amino acids such as threonine, to avoid such errors, it has a 'posttransfer' editing activity that hydrolyzes mischarged Thr-tRNA(Val) in a tRNA-dependent manner.</text>
</comment>
<comment type="catalytic activity">
    <reaction evidence="1">
        <text>tRNA(Val) + L-valine + ATP = L-valyl-tRNA(Val) + AMP + diphosphate</text>
        <dbReference type="Rhea" id="RHEA:10704"/>
        <dbReference type="Rhea" id="RHEA-COMP:9672"/>
        <dbReference type="Rhea" id="RHEA-COMP:9708"/>
        <dbReference type="ChEBI" id="CHEBI:30616"/>
        <dbReference type="ChEBI" id="CHEBI:33019"/>
        <dbReference type="ChEBI" id="CHEBI:57762"/>
        <dbReference type="ChEBI" id="CHEBI:78442"/>
        <dbReference type="ChEBI" id="CHEBI:78537"/>
        <dbReference type="ChEBI" id="CHEBI:456215"/>
        <dbReference type="EC" id="6.1.1.9"/>
    </reaction>
</comment>
<comment type="subunit">
    <text evidence="1">Monomer.</text>
</comment>
<comment type="subcellular location">
    <subcellularLocation>
        <location evidence="1">Cytoplasm</location>
    </subcellularLocation>
</comment>
<comment type="domain">
    <text evidence="1">ValRS has two distinct active sites: one for aminoacylation and one for editing. The misactivated threonine is translocated from the active site to the editing site.</text>
</comment>
<comment type="domain">
    <text evidence="1">The C-terminal coiled-coil domain is crucial for aminoacylation activity.</text>
</comment>
<comment type="similarity">
    <text evidence="1">Belongs to the class-I aminoacyl-tRNA synthetase family. ValS type 1 subfamily.</text>
</comment>
<dbReference type="EC" id="6.1.1.9" evidence="1"/>
<dbReference type="EMBL" id="BA000045">
    <property type="protein sequence ID" value="BAC90860.1"/>
    <property type="molecule type" value="Genomic_DNA"/>
</dbReference>
<dbReference type="RefSeq" id="NP_925865.1">
    <property type="nucleotide sequence ID" value="NC_005125.1"/>
</dbReference>
<dbReference type="RefSeq" id="WP_011142913.1">
    <property type="nucleotide sequence ID" value="NC_005125.1"/>
</dbReference>
<dbReference type="SMR" id="Q7NCQ9"/>
<dbReference type="FunCoup" id="Q7NCQ9">
    <property type="interactions" value="380"/>
</dbReference>
<dbReference type="STRING" id="251221.gene:10760423"/>
<dbReference type="EnsemblBacteria" id="BAC90860">
    <property type="protein sequence ID" value="BAC90860"/>
    <property type="gene ID" value="BAC90860"/>
</dbReference>
<dbReference type="KEGG" id="gvi:glr2919"/>
<dbReference type="PATRIC" id="fig|251221.4.peg.2948"/>
<dbReference type="eggNOG" id="COG0525">
    <property type="taxonomic scope" value="Bacteria"/>
</dbReference>
<dbReference type="HOGENOM" id="CLU_001493_0_2_3"/>
<dbReference type="InParanoid" id="Q7NCQ9"/>
<dbReference type="OrthoDB" id="9810365at2"/>
<dbReference type="PhylomeDB" id="Q7NCQ9"/>
<dbReference type="Proteomes" id="UP000000557">
    <property type="component" value="Chromosome"/>
</dbReference>
<dbReference type="GO" id="GO:0005829">
    <property type="term" value="C:cytosol"/>
    <property type="evidence" value="ECO:0000318"/>
    <property type="project" value="GO_Central"/>
</dbReference>
<dbReference type="GO" id="GO:0002161">
    <property type="term" value="F:aminoacyl-tRNA deacylase activity"/>
    <property type="evidence" value="ECO:0007669"/>
    <property type="project" value="InterPro"/>
</dbReference>
<dbReference type="GO" id="GO:0005524">
    <property type="term" value="F:ATP binding"/>
    <property type="evidence" value="ECO:0007669"/>
    <property type="project" value="UniProtKB-UniRule"/>
</dbReference>
<dbReference type="GO" id="GO:0004832">
    <property type="term" value="F:valine-tRNA ligase activity"/>
    <property type="evidence" value="ECO:0000318"/>
    <property type="project" value="GO_Central"/>
</dbReference>
<dbReference type="GO" id="GO:0006438">
    <property type="term" value="P:valyl-tRNA aminoacylation"/>
    <property type="evidence" value="ECO:0000318"/>
    <property type="project" value="GO_Central"/>
</dbReference>
<dbReference type="CDD" id="cd07962">
    <property type="entry name" value="Anticodon_Ia_Val"/>
    <property type="match status" value="1"/>
</dbReference>
<dbReference type="CDD" id="cd00817">
    <property type="entry name" value="ValRS_core"/>
    <property type="match status" value="1"/>
</dbReference>
<dbReference type="FunFam" id="1.10.287.380:FF:000001">
    <property type="entry name" value="Valine--tRNA ligase"/>
    <property type="match status" value="1"/>
</dbReference>
<dbReference type="FunFam" id="3.40.50.620:FF:000032">
    <property type="entry name" value="Valine--tRNA ligase"/>
    <property type="match status" value="1"/>
</dbReference>
<dbReference type="FunFam" id="3.90.740.10:FF:000005">
    <property type="entry name" value="Valine--tRNA ligase, mitochondrial"/>
    <property type="match status" value="1"/>
</dbReference>
<dbReference type="Gene3D" id="3.40.50.620">
    <property type="entry name" value="HUPs"/>
    <property type="match status" value="2"/>
</dbReference>
<dbReference type="Gene3D" id="1.10.730.10">
    <property type="entry name" value="Isoleucyl-tRNA Synthetase, Domain 1"/>
    <property type="match status" value="1"/>
</dbReference>
<dbReference type="Gene3D" id="1.10.287.380">
    <property type="entry name" value="Valyl-tRNA synthetase, C-terminal domain"/>
    <property type="match status" value="1"/>
</dbReference>
<dbReference type="Gene3D" id="3.90.740.10">
    <property type="entry name" value="Valyl/Leucyl/Isoleucyl-tRNA synthetase, editing domain"/>
    <property type="match status" value="1"/>
</dbReference>
<dbReference type="HAMAP" id="MF_02004">
    <property type="entry name" value="Val_tRNA_synth_type1"/>
    <property type="match status" value="1"/>
</dbReference>
<dbReference type="InterPro" id="IPR001412">
    <property type="entry name" value="aa-tRNA-synth_I_CS"/>
</dbReference>
<dbReference type="InterPro" id="IPR002300">
    <property type="entry name" value="aa-tRNA-synth_Ia"/>
</dbReference>
<dbReference type="InterPro" id="IPR033705">
    <property type="entry name" value="Anticodon_Ia_Val"/>
</dbReference>
<dbReference type="InterPro" id="IPR013155">
    <property type="entry name" value="M/V/L/I-tRNA-synth_anticd-bd"/>
</dbReference>
<dbReference type="InterPro" id="IPR014729">
    <property type="entry name" value="Rossmann-like_a/b/a_fold"/>
</dbReference>
<dbReference type="InterPro" id="IPR010978">
    <property type="entry name" value="tRNA-bd_arm"/>
</dbReference>
<dbReference type="InterPro" id="IPR009080">
    <property type="entry name" value="tRNAsynth_Ia_anticodon-bd"/>
</dbReference>
<dbReference type="InterPro" id="IPR037118">
    <property type="entry name" value="Val-tRNA_synth_C_sf"/>
</dbReference>
<dbReference type="InterPro" id="IPR019499">
    <property type="entry name" value="Val-tRNA_synth_tRNA-bd"/>
</dbReference>
<dbReference type="InterPro" id="IPR009008">
    <property type="entry name" value="Val/Leu/Ile-tRNA-synth_edit"/>
</dbReference>
<dbReference type="InterPro" id="IPR002303">
    <property type="entry name" value="Valyl-tRNA_ligase"/>
</dbReference>
<dbReference type="NCBIfam" id="NF004349">
    <property type="entry name" value="PRK05729.1"/>
    <property type="match status" value="1"/>
</dbReference>
<dbReference type="NCBIfam" id="TIGR00422">
    <property type="entry name" value="valS"/>
    <property type="match status" value="1"/>
</dbReference>
<dbReference type="PANTHER" id="PTHR11946:SF93">
    <property type="entry name" value="VALINE--TRNA LIGASE, CHLOROPLASTIC_MITOCHONDRIAL 2"/>
    <property type="match status" value="1"/>
</dbReference>
<dbReference type="PANTHER" id="PTHR11946">
    <property type="entry name" value="VALYL-TRNA SYNTHETASES"/>
    <property type="match status" value="1"/>
</dbReference>
<dbReference type="Pfam" id="PF08264">
    <property type="entry name" value="Anticodon_1"/>
    <property type="match status" value="1"/>
</dbReference>
<dbReference type="Pfam" id="PF00133">
    <property type="entry name" value="tRNA-synt_1"/>
    <property type="match status" value="1"/>
</dbReference>
<dbReference type="Pfam" id="PF10458">
    <property type="entry name" value="Val_tRNA-synt_C"/>
    <property type="match status" value="1"/>
</dbReference>
<dbReference type="PRINTS" id="PR00986">
    <property type="entry name" value="TRNASYNTHVAL"/>
</dbReference>
<dbReference type="SUPFAM" id="SSF47323">
    <property type="entry name" value="Anticodon-binding domain of a subclass of class I aminoacyl-tRNA synthetases"/>
    <property type="match status" value="1"/>
</dbReference>
<dbReference type="SUPFAM" id="SSF52374">
    <property type="entry name" value="Nucleotidylyl transferase"/>
    <property type="match status" value="1"/>
</dbReference>
<dbReference type="SUPFAM" id="SSF46589">
    <property type="entry name" value="tRNA-binding arm"/>
    <property type="match status" value="1"/>
</dbReference>
<dbReference type="SUPFAM" id="SSF50677">
    <property type="entry name" value="ValRS/IleRS/LeuRS editing domain"/>
    <property type="match status" value="1"/>
</dbReference>
<dbReference type="PROSITE" id="PS00178">
    <property type="entry name" value="AA_TRNA_LIGASE_I"/>
    <property type="match status" value="1"/>
</dbReference>
<protein>
    <recommendedName>
        <fullName evidence="1">Valine--tRNA ligase</fullName>
        <ecNumber evidence="1">6.1.1.9</ecNumber>
    </recommendedName>
    <alternativeName>
        <fullName evidence="1">Valyl-tRNA synthetase</fullName>
        <shortName evidence="1">ValRS</shortName>
    </alternativeName>
</protein>
<feature type="chain" id="PRO_0000224483" description="Valine--tRNA ligase">
    <location>
        <begin position="1"/>
        <end position="897"/>
    </location>
</feature>
<feature type="coiled-coil region" evidence="1">
    <location>
        <begin position="839"/>
        <end position="897"/>
    </location>
</feature>
<feature type="short sequence motif" description="'HIGH' region">
    <location>
        <begin position="46"/>
        <end position="56"/>
    </location>
</feature>
<feature type="short sequence motif" description="'KMSKS' region">
    <location>
        <begin position="532"/>
        <end position="536"/>
    </location>
</feature>
<feature type="binding site" evidence="1">
    <location>
        <position position="535"/>
    </location>
    <ligand>
        <name>ATP</name>
        <dbReference type="ChEBI" id="CHEBI:30616"/>
    </ligand>
</feature>
<evidence type="ECO:0000255" key="1">
    <source>
        <dbReference type="HAMAP-Rule" id="MF_02004"/>
    </source>
</evidence>
<reference key="1">
    <citation type="journal article" date="2003" name="DNA Res.">
        <title>Complete genome structure of Gloeobacter violaceus PCC 7421, a cyanobacterium that lacks thylakoids.</title>
        <authorList>
            <person name="Nakamura Y."/>
            <person name="Kaneko T."/>
            <person name="Sato S."/>
            <person name="Mimuro M."/>
            <person name="Miyashita H."/>
            <person name="Tsuchiya T."/>
            <person name="Sasamoto S."/>
            <person name="Watanabe A."/>
            <person name="Kawashima K."/>
            <person name="Kishida Y."/>
            <person name="Kiyokawa C."/>
            <person name="Kohara M."/>
            <person name="Matsumoto M."/>
            <person name="Matsuno A."/>
            <person name="Nakazaki N."/>
            <person name="Shimpo S."/>
            <person name="Takeuchi C."/>
            <person name="Yamada M."/>
            <person name="Tabata S."/>
        </authorList>
    </citation>
    <scope>NUCLEOTIDE SEQUENCE [LARGE SCALE GENOMIC DNA]</scope>
    <source>
        <strain>ATCC 29082 / PCC 7421</strain>
    </source>
</reference>
<keyword id="KW-0030">Aminoacyl-tRNA synthetase</keyword>
<keyword id="KW-0067">ATP-binding</keyword>
<keyword id="KW-0175">Coiled coil</keyword>
<keyword id="KW-0963">Cytoplasm</keyword>
<keyword id="KW-0436">Ligase</keyword>
<keyword id="KW-0547">Nucleotide-binding</keyword>
<keyword id="KW-0648">Protein biosynthesis</keyword>
<keyword id="KW-1185">Reference proteome</keyword>
<proteinExistence type="inferred from homology"/>
<sequence>MARTLPSQYDPFDAEPRWQRFWEEHRFFSPAADGPGKPFSLVLPPPNVTGSLHMGHALCFTLPDVVVRYRRMKGFKTLWLPGTDHASIAVHTVLEKQLRQEGKTRFDLGREAFLERAWAWKERSQDTIRGQLRRLGLSLDWTRESFTLDEKRNRAVVKVFVDLHRKGLIYRGKYLVNWCPASQTAVSDLEVDDKEEKGHLWQLRYPVADSDEFLVVATTRPETMLGDTGVAVHPEDPRYKHLIGREAELPILGRRIVIVGDEAVDREFGTGAVKVTPAHDPNDFEIGKRHGLPMINLLNPNGTYNENAGPYAGLDRFVVRKQVVARAAAEGWLVGIEDHVHNVPYSERGGVPIEPYLSDQWFLDVSGMATRVLEAFDSQNQPAFVPERWGKVYRDWLVRIRPWNISRQLWWGHRIPAWFVAGSEGEYVVAHDEAEAFAVARERYGPDVQLQRDQDVLDTWFSSSLWPFTTLGWPDQTEDLGVFYPNALMSTGFDIIFFWVARMAMMAGEFTGQIPFETVYINGLVRDEKGQKMSKTKGNGIDPIEMMDKYGTDALRYTLVREVTGAGQDVRFDYNRKTGESGAVDASKRFANKIWNASRFVLMNLDELTPAALGAADPGSLTLEDRWILGRLGQTARQIDELLGRYALGEAARSLYEFIWDDFCDWYVELAKPRLEALETRRGAQQVLAAVLDRTLRLLHPWMPHLSEEIWQLLHQPLEVASICVQPFPTGTDLPAEPPAEFALMQQIVRTIRNLRAFAQVPPLRTLPAVRLASRNAEERAAIDATRQAIAHLGRVEQLPLEEVADEHLKQVAVGVAGTVQVMLPLGGLVDVAALAGKLRRSLEKLDKESGVLAARLDNASYLANAPAELVTESRAKLAEQRAQAAILAEQLARLEN</sequence>
<accession>Q7NCQ9</accession>
<name>SYV_GLOVI</name>
<organism>
    <name type="scientific">Gloeobacter violaceus (strain ATCC 29082 / PCC 7421)</name>
    <dbReference type="NCBI Taxonomy" id="251221"/>
    <lineage>
        <taxon>Bacteria</taxon>
        <taxon>Bacillati</taxon>
        <taxon>Cyanobacteriota</taxon>
        <taxon>Cyanophyceae</taxon>
        <taxon>Gloeobacterales</taxon>
        <taxon>Gloeobacteraceae</taxon>
        <taxon>Gloeobacter</taxon>
    </lineage>
</organism>
<gene>
    <name evidence="1" type="primary">valS</name>
    <name type="ordered locus">glr2919</name>
</gene>